<protein>
    <recommendedName>
        <fullName>Uncharacterized protein MT2364</fullName>
    </recommendedName>
</protein>
<dbReference type="EMBL" id="AE000516">
    <property type="protein sequence ID" value="AAK46650.1"/>
    <property type="molecule type" value="Genomic_DNA"/>
</dbReference>
<dbReference type="PIR" id="G70734">
    <property type="entry name" value="G70734"/>
</dbReference>
<dbReference type="RefSeq" id="WP_003902165.1">
    <property type="nucleotide sequence ID" value="NZ_KK341227.1"/>
</dbReference>
<dbReference type="RefSeq" id="WP_010924509.1">
    <property type="nucleotide sequence ID" value="NC_002755.2"/>
</dbReference>
<dbReference type="SMR" id="P9WLC6"/>
<dbReference type="ESTHER" id="myctu-Y2307">
    <property type="family name" value="ABHD13-BEM46"/>
</dbReference>
<dbReference type="KEGG" id="mtc:MT2364"/>
<dbReference type="PATRIC" id="fig|83331.31.peg.2545"/>
<dbReference type="HOGENOM" id="CLU_029375_2_1_11"/>
<dbReference type="Proteomes" id="UP000001020">
    <property type="component" value="Chromosome"/>
</dbReference>
<dbReference type="GO" id="GO:0005886">
    <property type="term" value="C:plasma membrane"/>
    <property type="evidence" value="ECO:0007669"/>
    <property type="project" value="UniProtKB-SubCell"/>
</dbReference>
<dbReference type="Gene3D" id="3.40.50.1820">
    <property type="entry name" value="alpha/beta hydrolase"/>
    <property type="match status" value="1"/>
</dbReference>
<dbReference type="InterPro" id="IPR029058">
    <property type="entry name" value="AB_hydrolase_fold"/>
</dbReference>
<dbReference type="InterPro" id="IPR022742">
    <property type="entry name" value="Hydrolase_4"/>
</dbReference>
<dbReference type="PANTHER" id="PTHR12277">
    <property type="entry name" value="ALPHA/BETA HYDROLASE DOMAIN-CONTAINING PROTEIN"/>
    <property type="match status" value="1"/>
</dbReference>
<dbReference type="PANTHER" id="PTHR12277:SF79">
    <property type="entry name" value="XAA-PRO DIPEPTIDYL-PEPTIDASE-RELATED"/>
    <property type="match status" value="1"/>
</dbReference>
<dbReference type="Pfam" id="PF12146">
    <property type="entry name" value="Hydrolase_4"/>
    <property type="match status" value="1"/>
</dbReference>
<dbReference type="SUPFAM" id="SSF53474">
    <property type="entry name" value="alpha/beta-Hydrolases"/>
    <property type="match status" value="1"/>
</dbReference>
<name>Y2307_MYCTO</name>
<gene>
    <name type="ordered locus">MT2364</name>
</gene>
<comment type="subcellular location">
    <subcellularLocation>
        <location evidence="2">Cell membrane</location>
        <topology evidence="2">Multi-pass membrane protein</topology>
    </subcellularLocation>
</comment>
<comment type="similarity">
    <text evidence="2">To S.pombe bem46 and yeast YNL320w.</text>
</comment>
<organism>
    <name type="scientific">Mycobacterium tuberculosis (strain CDC 1551 / Oshkosh)</name>
    <dbReference type="NCBI Taxonomy" id="83331"/>
    <lineage>
        <taxon>Bacteria</taxon>
        <taxon>Bacillati</taxon>
        <taxon>Actinomycetota</taxon>
        <taxon>Actinomycetes</taxon>
        <taxon>Mycobacteriales</taxon>
        <taxon>Mycobacteriaceae</taxon>
        <taxon>Mycobacterium</taxon>
        <taxon>Mycobacterium tuberculosis complex</taxon>
    </lineage>
</organism>
<sequence length="281" mass="29641">MSLKRCRALPVVAIVALVASGVITFIWSQQRRLIYFPSAGPVPSASSVLPAGRDVVVETQDGMRLGGWYFPHTSGGSGPAVLVCNGNAGDRSMRAELAVALHGLGLSVLLFDYRGYGGNPGRPSEQGLAADARAAQEWLSGQSDVDPARIAYFGESLGAAVAVGLAVQRPPAALVLRSPFTSLAEVGAVHYPWLPLRRLLLDHYPSIERIASVHAPVLVIAGGSDDIVPATLSERLVAAAAEPKRYVVVPGVGHNDPELLDGRVMLDAIRRFLTETAVLGQ</sequence>
<feature type="chain" id="PRO_0000427502" description="Uncharacterized protein MT2364">
    <location>
        <begin position="1"/>
        <end position="281"/>
    </location>
</feature>
<feature type="transmembrane region" description="Helical" evidence="1">
    <location>
        <begin position="8"/>
        <end position="28"/>
    </location>
</feature>
<feature type="transmembrane region" description="Helical" evidence="1">
    <location>
        <begin position="97"/>
        <end position="117"/>
    </location>
</feature>
<feature type="transmembrane region" description="Helical" evidence="1">
    <location>
        <begin position="147"/>
        <end position="167"/>
    </location>
</feature>
<feature type="transmembrane region" description="Helical" evidence="1">
    <location>
        <begin position="210"/>
        <end position="230"/>
    </location>
</feature>
<keyword id="KW-1003">Cell membrane</keyword>
<keyword id="KW-0472">Membrane</keyword>
<keyword id="KW-1185">Reference proteome</keyword>
<keyword id="KW-0812">Transmembrane</keyword>
<keyword id="KW-1133">Transmembrane helix</keyword>
<accession>P9WLC6</accession>
<accession>L0T9F3</accession>
<accession>Q50658</accession>
<proteinExistence type="predicted"/>
<reference key="1">
    <citation type="journal article" date="2002" name="J. Bacteriol.">
        <title>Whole-genome comparison of Mycobacterium tuberculosis clinical and laboratory strains.</title>
        <authorList>
            <person name="Fleischmann R.D."/>
            <person name="Alland D."/>
            <person name="Eisen J.A."/>
            <person name="Carpenter L."/>
            <person name="White O."/>
            <person name="Peterson J.D."/>
            <person name="DeBoy R.T."/>
            <person name="Dodson R.J."/>
            <person name="Gwinn M.L."/>
            <person name="Haft D.H."/>
            <person name="Hickey E.K."/>
            <person name="Kolonay J.F."/>
            <person name="Nelson W.C."/>
            <person name="Umayam L.A."/>
            <person name="Ermolaeva M.D."/>
            <person name="Salzberg S.L."/>
            <person name="Delcher A."/>
            <person name="Utterback T.R."/>
            <person name="Weidman J.F."/>
            <person name="Khouri H.M."/>
            <person name="Gill J."/>
            <person name="Mikula A."/>
            <person name="Bishai W."/>
            <person name="Jacobs W.R. Jr."/>
            <person name="Venter J.C."/>
            <person name="Fraser C.M."/>
        </authorList>
    </citation>
    <scope>NUCLEOTIDE SEQUENCE [LARGE SCALE GENOMIC DNA]</scope>
    <source>
        <strain>CDC 1551 / Oshkosh</strain>
    </source>
</reference>
<evidence type="ECO:0000255" key="1"/>
<evidence type="ECO:0000305" key="2"/>